<sequence>MPLPENLIAITMHVLHGSCTGLIIKHIKYFTKILRLINRPTIPYKEEHYAIRVILGLNVFIHPYLAQDVNGLNAKPLTHPMCKPNSTSDIRDAHDLTYMDHIVSRLERLDLTWAFTALRNIWASIHPIPPGLPIDGSVCPGLSFCDADSRDSRTAAVWAVEVQTATNLRAWSRNYDICWSLRHNSSP</sequence>
<reference key="1">
    <citation type="journal article" date="1993" name="J. Gen. Virol.">
        <title>Nucleotide sequence evidence for the occurrence of three distinct whitefly-transmitted geminiviruses in cassava.</title>
        <authorList>
            <person name="Hong Y.G."/>
            <person name="Robinson D.J."/>
            <person name="Harrison B.D."/>
        </authorList>
    </citation>
    <scope>NUCLEOTIDE SEQUENCE [GENOMIC DNA]</scope>
</reference>
<proteinExistence type="uncertain"/>
<gene>
    <name type="ORF">AC5</name>
    <name type="ORF">AL5</name>
</gene>
<dbReference type="EMBL" id="Z24758">
    <property type="protein sequence ID" value="CAA80889.1"/>
    <property type="molecule type" value="Genomic_DNA"/>
</dbReference>
<dbReference type="PIR" id="S35886">
    <property type="entry name" value="S35886"/>
</dbReference>
<dbReference type="RefSeq" id="NP_047229.1">
    <property type="nucleotide sequence ID" value="NC_001932.1"/>
</dbReference>
<dbReference type="KEGG" id="vg:991059"/>
<dbReference type="OrthoDB" id="13982at10239"/>
<dbReference type="Proteomes" id="UP000007210">
    <property type="component" value="Genome"/>
</dbReference>
<dbReference type="InterPro" id="IPR013671">
    <property type="entry name" value="Gemini_AC4/5_cons-dom"/>
</dbReference>
<dbReference type="InterPro" id="IPR006892">
    <property type="entry name" value="Gemini_AC4_5_cons_dom_1"/>
</dbReference>
<dbReference type="Pfam" id="PF04807">
    <property type="entry name" value="Gemini_AC4_5"/>
    <property type="match status" value="1"/>
</dbReference>
<dbReference type="Pfam" id="PF08464">
    <property type="entry name" value="Gemini_AC4_5_2"/>
    <property type="match status" value="1"/>
</dbReference>
<accession>Q08591</accession>
<evidence type="ECO:0000305" key="1"/>
<organismHost>
    <name type="scientific">Manihot esculenta</name>
    <name type="common">Cassava</name>
    <name type="synonym">Jatropha manihot</name>
    <dbReference type="NCBI Taxonomy" id="3983"/>
</organismHost>
<organism>
    <name type="scientific">Indian cassava mosaic virus</name>
    <name type="common">ICMV</name>
    <dbReference type="NCBI Taxonomy" id="31600"/>
    <lineage>
        <taxon>Viruses</taxon>
        <taxon>Monodnaviria</taxon>
        <taxon>Shotokuvirae</taxon>
        <taxon>Cressdnaviricota</taxon>
        <taxon>Repensiviricetes</taxon>
        <taxon>Geplafuvirales</taxon>
        <taxon>Geminiviridae</taxon>
        <taxon>Begomovirus</taxon>
    </lineage>
</organism>
<comment type="caution">
    <text evidence="1">Product of a dubious gene prediction. AC5 is located inside the CP gene but in the opposite orientation and has been reported for ICMV and PHV in 1993 and recently for ToCMoV. Based on the domain prediction for this protein, numerous AC5 sequences have been deposited in the nucleotide databases. It is not proved that this ORF is transcribed and translated and most of the time, it is not cited in the recent literature on geminiviruses. Its significance remains to be determined.</text>
</comment>
<feature type="chain" id="PRO_0000222271" description="Putative uncharacterized protein AC5">
    <location>
        <begin position="1"/>
        <end position="187"/>
    </location>
</feature>
<protein>
    <recommendedName>
        <fullName>Putative uncharacterized protein AC5</fullName>
    </recommendedName>
</protein>
<name>YAL4_ICMV</name>